<dbReference type="EMBL" id="AY757813">
    <property type="protein sequence ID" value="AAV74351.1"/>
    <property type="molecule type" value="mRNA"/>
</dbReference>
<dbReference type="RefSeq" id="YP_009117672.1">
    <property type="nucleotide sequence ID" value="NC_026299.1"/>
</dbReference>
<dbReference type="SMR" id="Q5QA82"/>
<dbReference type="GeneID" id="22975382"/>
<dbReference type="GO" id="GO:0009535">
    <property type="term" value="C:chloroplast thylakoid membrane"/>
    <property type="evidence" value="ECO:0007669"/>
    <property type="project" value="UniProtKB-SubCell"/>
</dbReference>
<dbReference type="GO" id="GO:0009539">
    <property type="term" value="C:photosystem II reaction center"/>
    <property type="evidence" value="ECO:0007669"/>
    <property type="project" value="InterPro"/>
</dbReference>
<dbReference type="GO" id="GO:0015979">
    <property type="term" value="P:photosynthesis"/>
    <property type="evidence" value="ECO:0007669"/>
    <property type="project" value="UniProtKB-UniRule"/>
</dbReference>
<dbReference type="GO" id="GO:0042549">
    <property type="term" value="P:photosystem II stabilization"/>
    <property type="evidence" value="ECO:0007669"/>
    <property type="project" value="InterPro"/>
</dbReference>
<dbReference type="FunFam" id="1.10.287.740:FF:000001">
    <property type="entry name" value="Photosystem II reaction center protein Z"/>
    <property type="match status" value="1"/>
</dbReference>
<dbReference type="Gene3D" id="1.10.287.740">
    <property type="entry name" value="Photosystem II PsbZ, reaction centre"/>
    <property type="match status" value="1"/>
</dbReference>
<dbReference type="HAMAP" id="MF_00644">
    <property type="entry name" value="PSII_PsbZ"/>
    <property type="match status" value="1"/>
</dbReference>
<dbReference type="InterPro" id="IPR002644">
    <property type="entry name" value="PSII_PsbZ"/>
</dbReference>
<dbReference type="InterPro" id="IPR036512">
    <property type="entry name" value="PSII_PsbZ_sf"/>
</dbReference>
<dbReference type="NCBIfam" id="TIGR03043">
    <property type="entry name" value="PS_II_psbZ"/>
    <property type="match status" value="1"/>
</dbReference>
<dbReference type="PANTHER" id="PTHR34971">
    <property type="entry name" value="PHOTOSYSTEM II REACTION CENTER PROTEIN Z"/>
    <property type="match status" value="1"/>
</dbReference>
<dbReference type="PANTHER" id="PTHR34971:SF2">
    <property type="entry name" value="PHOTOSYSTEM II REACTION CENTER PROTEIN Z"/>
    <property type="match status" value="1"/>
</dbReference>
<dbReference type="Pfam" id="PF01737">
    <property type="entry name" value="Ycf9"/>
    <property type="match status" value="1"/>
</dbReference>
<dbReference type="SUPFAM" id="SSF161055">
    <property type="entry name" value="PsbZ-like"/>
    <property type="match status" value="1"/>
</dbReference>
<evidence type="ECO:0000255" key="1">
    <source>
        <dbReference type="HAMAP-Rule" id="MF_00644"/>
    </source>
</evidence>
<gene>
    <name evidence="1" type="primary">psbZ</name>
    <name type="synonym">lhbA</name>
</gene>
<proteinExistence type="inferred from homology"/>
<organism>
    <name type="scientific">Acorus gramineus</name>
    <name type="common">Dwarf sweet flag</name>
    <dbReference type="NCBI Taxonomy" id="55184"/>
    <lineage>
        <taxon>Eukaryota</taxon>
        <taxon>Viridiplantae</taxon>
        <taxon>Streptophyta</taxon>
        <taxon>Embryophyta</taxon>
        <taxon>Tracheophyta</taxon>
        <taxon>Spermatophyta</taxon>
        <taxon>Magnoliopsida</taxon>
        <taxon>Liliopsida</taxon>
        <taxon>Acoraceae</taxon>
        <taxon>Acorus</taxon>
    </lineage>
</organism>
<protein>
    <recommendedName>
        <fullName evidence="1">Photosystem II reaction center protein Z</fullName>
        <shortName evidence="1">PSII-Z</shortName>
    </recommendedName>
</protein>
<feature type="chain" id="PRO_0000217685" description="Photosystem II reaction center protein Z">
    <location>
        <begin position="1"/>
        <end position="62"/>
    </location>
</feature>
<feature type="transmembrane region" description="Helical" evidence="1">
    <location>
        <begin position="8"/>
        <end position="28"/>
    </location>
</feature>
<feature type="transmembrane region" description="Helical" evidence="1">
    <location>
        <begin position="41"/>
        <end position="61"/>
    </location>
</feature>
<name>PSBZ_ACOGR</name>
<sequence>MTIAFQLAIFALIATSSILLISVPVVFASPDGWSSNKNVVFSGTSLWIGLVFLVGILNSLIS</sequence>
<reference key="1">
    <citation type="journal article" date="2004" name="BMC Evol. Biol.">
        <title>Long branch attraction, taxon sampling, and the earliest angiosperms: Amborella or monocots?</title>
        <authorList>
            <person name="Stefanovic S."/>
            <person name="Rice D.W."/>
            <person name="Palmer J.D."/>
        </authorList>
    </citation>
    <scope>NUCLEOTIDE SEQUENCE [MRNA]</scope>
</reference>
<keyword id="KW-0150">Chloroplast</keyword>
<keyword id="KW-0472">Membrane</keyword>
<keyword id="KW-0602">Photosynthesis</keyword>
<keyword id="KW-0604">Photosystem II</keyword>
<keyword id="KW-0934">Plastid</keyword>
<keyword id="KW-0674">Reaction center</keyword>
<keyword id="KW-0793">Thylakoid</keyword>
<keyword id="KW-0812">Transmembrane</keyword>
<keyword id="KW-1133">Transmembrane helix</keyword>
<geneLocation type="chloroplast"/>
<accession>Q5QA82</accession>
<comment type="function">
    <text evidence="1">May control the interaction of photosystem II (PSII) cores with the light-harvesting antenna, regulates electron flow through the 2 photosystem reaction centers. PSII is a light-driven water plastoquinone oxidoreductase, using light energy to abstract electrons from H(2)O, generating a proton gradient subsequently used for ATP formation.</text>
</comment>
<comment type="subunit">
    <text evidence="1">PSII is composed of 1 copy each of membrane proteins PsbA, PsbB, PsbC, PsbD, PsbE, PsbF, PsbH, PsbI, PsbJ, PsbK, PsbL, PsbM, PsbT, PsbY, PsbZ, Psb30/Ycf12, at least 3 peripheral proteins of the oxygen-evolving complex and a large number of cofactors. It forms dimeric complexes.</text>
</comment>
<comment type="subcellular location">
    <subcellularLocation>
        <location evidence="1">Plastid</location>
        <location evidence="1">Chloroplast thylakoid membrane</location>
        <topology evidence="1">Multi-pass membrane protein</topology>
    </subcellularLocation>
</comment>
<comment type="similarity">
    <text evidence="1">Belongs to the PsbZ family.</text>
</comment>